<reference key="1">
    <citation type="journal article" date="2000" name="Proc. Natl. Acad. Sci. U.S.A.">
        <title>Archaeal adaptation to higher temperatures revealed by genomic sequence of Thermoplasma volcanium.</title>
        <authorList>
            <person name="Kawashima T."/>
            <person name="Amano N."/>
            <person name="Koike H."/>
            <person name="Makino S."/>
            <person name="Higuchi S."/>
            <person name="Kawashima-Ohya Y."/>
            <person name="Watanabe K."/>
            <person name="Yamazaki M."/>
            <person name="Kanehori K."/>
            <person name="Kawamoto T."/>
            <person name="Nunoshiba T."/>
            <person name="Yamamoto Y."/>
            <person name="Aramaki H."/>
            <person name="Makino K."/>
            <person name="Suzuki M."/>
        </authorList>
    </citation>
    <scope>NUCLEOTIDE SEQUENCE [LARGE SCALE GENOMIC DNA]</scope>
    <source>
        <strain>ATCC 51530 / DSM 4299 / JCM 9571 / NBRC 15438 / GSS1</strain>
    </source>
</reference>
<dbReference type="EMBL" id="BA000011">
    <property type="protein sequence ID" value="BAB59387.1"/>
    <property type="molecule type" value="Genomic_DNA"/>
</dbReference>
<dbReference type="RefSeq" id="WP_010916501.1">
    <property type="nucleotide sequence ID" value="NC_002689.2"/>
</dbReference>
<dbReference type="SMR" id="Q97C60"/>
<dbReference type="STRING" id="273116.gene:9381016"/>
<dbReference type="PaxDb" id="273116-14324459"/>
<dbReference type="GeneID" id="1440761"/>
<dbReference type="KEGG" id="tvo:TVG0258796"/>
<dbReference type="eggNOG" id="arCOG04358">
    <property type="taxonomic scope" value="Archaea"/>
</dbReference>
<dbReference type="HOGENOM" id="CLU_056887_3_0_2"/>
<dbReference type="OrthoDB" id="57189at2157"/>
<dbReference type="PhylomeDB" id="Q97C60"/>
<dbReference type="Proteomes" id="UP000001017">
    <property type="component" value="Chromosome"/>
</dbReference>
<dbReference type="GO" id="GO:0005737">
    <property type="term" value="C:cytoplasm"/>
    <property type="evidence" value="ECO:0007669"/>
    <property type="project" value="UniProtKB-SubCell"/>
</dbReference>
<dbReference type="GO" id="GO:0097163">
    <property type="term" value="F:sulfur carrier activity"/>
    <property type="evidence" value="ECO:0007669"/>
    <property type="project" value="UniProtKB-UniRule"/>
</dbReference>
<dbReference type="GO" id="GO:0016783">
    <property type="term" value="F:sulfurtransferase activity"/>
    <property type="evidence" value="ECO:0007669"/>
    <property type="project" value="InterPro"/>
</dbReference>
<dbReference type="GO" id="GO:0006777">
    <property type="term" value="P:Mo-molybdopterin cofactor biosynthetic process"/>
    <property type="evidence" value="ECO:0007669"/>
    <property type="project" value="UniProtKB-UniRule"/>
</dbReference>
<dbReference type="Gene3D" id="3.10.20.10">
    <property type="match status" value="1"/>
</dbReference>
<dbReference type="Gene3D" id="3.40.140.10">
    <property type="entry name" value="Cytidine Deaminase, domain 2"/>
    <property type="match status" value="1"/>
</dbReference>
<dbReference type="HAMAP" id="MF_00187">
    <property type="entry name" value="FdhD"/>
    <property type="match status" value="1"/>
</dbReference>
<dbReference type="InterPro" id="IPR016193">
    <property type="entry name" value="Cytidine_deaminase-like"/>
</dbReference>
<dbReference type="InterPro" id="IPR003786">
    <property type="entry name" value="FdhD"/>
</dbReference>
<dbReference type="NCBIfam" id="TIGR00129">
    <property type="entry name" value="fdhD_narQ"/>
    <property type="match status" value="1"/>
</dbReference>
<dbReference type="PANTHER" id="PTHR30592">
    <property type="entry name" value="FORMATE DEHYDROGENASE"/>
    <property type="match status" value="1"/>
</dbReference>
<dbReference type="PANTHER" id="PTHR30592:SF1">
    <property type="entry name" value="SULFUR CARRIER PROTEIN FDHD"/>
    <property type="match status" value="1"/>
</dbReference>
<dbReference type="Pfam" id="PF02634">
    <property type="entry name" value="FdhD-NarQ"/>
    <property type="match status" value="1"/>
</dbReference>
<dbReference type="PIRSF" id="PIRSF015626">
    <property type="entry name" value="FdhD"/>
    <property type="match status" value="1"/>
</dbReference>
<dbReference type="SUPFAM" id="SSF53927">
    <property type="entry name" value="Cytidine deaminase-like"/>
    <property type="match status" value="1"/>
</dbReference>
<protein>
    <recommendedName>
        <fullName evidence="1">Sulfur carrier protein FdhD</fullName>
    </recommendedName>
</protein>
<name>FDHD_THEVO</name>
<accession>Q97C60</accession>
<evidence type="ECO:0000255" key="1">
    <source>
        <dbReference type="HAMAP-Rule" id="MF_00187"/>
    </source>
</evidence>
<proteinExistence type="inferred from homology"/>
<gene>
    <name evidence="1" type="primary">fdhD</name>
    <name type="ordered locus">TV0245</name>
    <name type="ORF">TVG0258796</name>
</gene>
<organism>
    <name type="scientific">Thermoplasma volcanium (strain ATCC 51530 / DSM 4299 / JCM 9571 / NBRC 15438 / GSS1)</name>
    <dbReference type="NCBI Taxonomy" id="273116"/>
    <lineage>
        <taxon>Archaea</taxon>
        <taxon>Methanobacteriati</taxon>
        <taxon>Thermoplasmatota</taxon>
        <taxon>Thermoplasmata</taxon>
        <taxon>Thermoplasmatales</taxon>
        <taxon>Thermoplasmataceae</taxon>
        <taxon>Thermoplasma</taxon>
    </lineage>
</organism>
<comment type="function">
    <text evidence="1">Required for formate dehydrogenase (FDH) activity. Acts as a sulfur carrier protein that transfers sulfur from IscS to the molybdenum cofactor prior to its insertion into FDH.</text>
</comment>
<comment type="subcellular location">
    <subcellularLocation>
        <location evidence="1">Cytoplasm</location>
    </subcellularLocation>
</comment>
<comment type="similarity">
    <text evidence="1">Belongs to the FdhD family.</text>
</comment>
<sequence length="279" mass="30327">MKAATHLNGLTSHRTLKRIDSYGWLEAEDQVAQEEPLEIKFRIGSDKEKSAGIVMRTPVHDDWLAVGFLYSEGILHDRRWINGIEGVSIEGKAQDNIVTVNIDPRNGSFDPDYRERFVNSSCGICGKSTINGIFLRMGKIKRDNIKIDPGVIVSLPVIMKGMQQLFSKTGGIHAAALFSADGKPIVTAEDIGRHNAVDKVVGFSLIEGIDTSTLILQVSGRAGFEIVEKAAIAGIPVICSVSAPSSLAIEVCESLGLTLICFVRGSSFNVYTHAERIMI</sequence>
<feature type="chain" id="PRO_0000152943" description="Sulfur carrier protein FdhD">
    <location>
        <begin position="1"/>
        <end position="279"/>
    </location>
</feature>
<feature type="active site" description="Cysteine persulfide intermediate" evidence="1">
    <location>
        <position position="122"/>
    </location>
</feature>
<keyword id="KW-0963">Cytoplasm</keyword>
<keyword id="KW-0501">Molybdenum cofactor biosynthesis</keyword>